<evidence type="ECO:0000255" key="1">
    <source>
        <dbReference type="HAMAP-Rule" id="MF_00395"/>
    </source>
</evidence>
<name>PETN_PROM4</name>
<comment type="function">
    <text evidence="1">Component of the cytochrome b6-f complex, which mediates electron transfer between photosystem II (PSII) and photosystem I (PSI), cyclic electron flow around PSI, and state transitions.</text>
</comment>
<comment type="subunit">
    <text evidence="1">The 4 large subunits of the cytochrome b6-f complex are cytochrome b6, subunit IV (17 kDa polypeptide, PetD), cytochrome f and the Rieske protein, while the 4 small subunits are PetG, PetL, PetM and PetN. The complex functions as a dimer.</text>
</comment>
<comment type="subcellular location">
    <subcellularLocation>
        <location evidence="1">Cellular thylakoid membrane</location>
        <topology evidence="1">Single-pass membrane protein</topology>
    </subcellularLocation>
</comment>
<comment type="similarity">
    <text evidence="1">Belongs to the PetN family.</text>
</comment>
<feature type="chain" id="PRO_1000192359" description="Cytochrome b6-f complex subunit 8">
    <location>
        <begin position="1"/>
        <end position="33"/>
    </location>
</feature>
<feature type="transmembrane region" description="Helical" evidence="1">
    <location>
        <begin position="2"/>
        <end position="22"/>
    </location>
</feature>
<keyword id="KW-0249">Electron transport</keyword>
<keyword id="KW-0472">Membrane</keyword>
<keyword id="KW-0602">Photosynthesis</keyword>
<keyword id="KW-1185">Reference proteome</keyword>
<keyword id="KW-0793">Thylakoid</keyword>
<keyword id="KW-0812">Transmembrane</keyword>
<keyword id="KW-1133">Transmembrane helix</keyword>
<keyword id="KW-0813">Transport</keyword>
<sequence length="33" mass="3657">MLFTFAWASLAAIFTFSIAMVVWGRNGDGTIDF</sequence>
<gene>
    <name evidence="1" type="primary">petN</name>
    <name type="ordered locus">P9211_08411</name>
</gene>
<organism>
    <name type="scientific">Prochlorococcus marinus (strain MIT 9211)</name>
    <dbReference type="NCBI Taxonomy" id="93059"/>
    <lineage>
        <taxon>Bacteria</taxon>
        <taxon>Bacillati</taxon>
        <taxon>Cyanobacteriota</taxon>
        <taxon>Cyanophyceae</taxon>
        <taxon>Synechococcales</taxon>
        <taxon>Prochlorococcaceae</taxon>
        <taxon>Prochlorococcus</taxon>
    </lineage>
</organism>
<proteinExistence type="inferred from homology"/>
<dbReference type="EMBL" id="CP000878">
    <property type="protein sequence ID" value="ABX08772.1"/>
    <property type="molecule type" value="Genomic_DNA"/>
</dbReference>
<dbReference type="RefSeq" id="WP_012195394.1">
    <property type="nucleotide sequence ID" value="NC_009976.1"/>
</dbReference>
<dbReference type="SMR" id="A9BAB0"/>
<dbReference type="STRING" id="93059.P9211_08411"/>
<dbReference type="KEGG" id="pmj:P9211_08411"/>
<dbReference type="HOGENOM" id="CLU_215774_0_0_3"/>
<dbReference type="OrthoDB" id="560308at2"/>
<dbReference type="Proteomes" id="UP000000788">
    <property type="component" value="Chromosome"/>
</dbReference>
<dbReference type="GO" id="GO:0009512">
    <property type="term" value="C:cytochrome b6f complex"/>
    <property type="evidence" value="ECO:0007669"/>
    <property type="project" value="InterPro"/>
</dbReference>
<dbReference type="GO" id="GO:0031676">
    <property type="term" value="C:plasma membrane-derived thylakoid membrane"/>
    <property type="evidence" value="ECO:0007669"/>
    <property type="project" value="UniProtKB-SubCell"/>
</dbReference>
<dbReference type="GO" id="GO:0045158">
    <property type="term" value="F:electron transporter, transferring electrons within cytochrome b6/f complex of photosystem II activity"/>
    <property type="evidence" value="ECO:0007669"/>
    <property type="project" value="InterPro"/>
</dbReference>
<dbReference type="GO" id="GO:0017004">
    <property type="term" value="P:cytochrome complex assembly"/>
    <property type="evidence" value="ECO:0007669"/>
    <property type="project" value="UniProtKB-UniRule"/>
</dbReference>
<dbReference type="GO" id="GO:0015979">
    <property type="term" value="P:photosynthesis"/>
    <property type="evidence" value="ECO:0007669"/>
    <property type="project" value="UniProtKB-KW"/>
</dbReference>
<dbReference type="HAMAP" id="MF_00395">
    <property type="entry name" value="Cytb6_f_PetN"/>
    <property type="match status" value="1"/>
</dbReference>
<dbReference type="InterPro" id="IPR036143">
    <property type="entry name" value="Cytochr_b6-f_cplx_su8_sf"/>
</dbReference>
<dbReference type="InterPro" id="IPR005497">
    <property type="entry name" value="Cytochrome_b6-f_cplx_su8"/>
</dbReference>
<dbReference type="NCBIfam" id="NF002709">
    <property type="entry name" value="PRK02529.1"/>
    <property type="match status" value="1"/>
</dbReference>
<dbReference type="Pfam" id="PF03742">
    <property type="entry name" value="PetN"/>
    <property type="match status" value="1"/>
</dbReference>
<dbReference type="SUPFAM" id="SSF103451">
    <property type="entry name" value="PetN subunit of the cytochrome b6f complex"/>
    <property type="match status" value="1"/>
</dbReference>
<protein>
    <recommendedName>
        <fullName evidence="1">Cytochrome b6-f complex subunit 8</fullName>
    </recommendedName>
    <alternativeName>
        <fullName evidence="1">Cytochrome b6-f complex subunit PetN</fullName>
    </alternativeName>
    <alternativeName>
        <fullName evidence="1">Cytochrome b6-f complex subunit VIII</fullName>
    </alternativeName>
</protein>
<reference key="1">
    <citation type="journal article" date="2007" name="PLoS Genet.">
        <title>Patterns and implications of gene gain and loss in the evolution of Prochlorococcus.</title>
        <authorList>
            <person name="Kettler G.C."/>
            <person name="Martiny A.C."/>
            <person name="Huang K."/>
            <person name="Zucker J."/>
            <person name="Coleman M.L."/>
            <person name="Rodrigue S."/>
            <person name="Chen F."/>
            <person name="Lapidus A."/>
            <person name="Ferriera S."/>
            <person name="Johnson J."/>
            <person name="Steglich C."/>
            <person name="Church G.M."/>
            <person name="Richardson P."/>
            <person name="Chisholm S.W."/>
        </authorList>
    </citation>
    <scope>NUCLEOTIDE SEQUENCE [LARGE SCALE GENOMIC DNA]</scope>
    <source>
        <strain>MIT 9211</strain>
    </source>
</reference>
<accession>A9BAB0</accession>